<organism>
    <name type="scientific">Fusarium mangiferae</name>
    <name type="common">Mango malformation disease fungus</name>
    <dbReference type="NCBI Taxonomy" id="192010"/>
    <lineage>
        <taxon>Eukaryota</taxon>
        <taxon>Fungi</taxon>
        <taxon>Dikarya</taxon>
        <taxon>Ascomycota</taxon>
        <taxon>Pezizomycotina</taxon>
        <taxon>Sordariomycetes</taxon>
        <taxon>Hypocreomycetidae</taxon>
        <taxon>Hypocreales</taxon>
        <taxon>Nectriaceae</taxon>
        <taxon>Fusarium</taxon>
        <taxon>Fusarium fujikuroi species complex</taxon>
    </lineage>
</organism>
<accession>A0A1L7TZE5</accession>
<proteinExistence type="inferred from homology"/>
<reference key="1">
    <citation type="journal article" date="2016" name="Genome Biol. Evol.">
        <title>Comparative 'omics' of the Fusarium fujikuroi species complex highlights differences in genetic potential and metabolite synthesis.</title>
        <authorList>
            <person name="Niehaus E.-M."/>
            <person name="Muensterkoetter M."/>
            <person name="Proctor R.H."/>
            <person name="Brown D.W."/>
            <person name="Sharon A."/>
            <person name="Idan Y."/>
            <person name="Oren-Young L."/>
            <person name="Sieber C.M."/>
            <person name="Novak O."/>
            <person name="Pencik A."/>
            <person name="Tarkowska D."/>
            <person name="Hromadova K."/>
            <person name="Freeman S."/>
            <person name="Maymon M."/>
            <person name="Elazar M."/>
            <person name="Youssef S.A."/>
            <person name="El-Shabrawy E.S.M."/>
            <person name="Shalaby A.B.A."/>
            <person name="Houterman P."/>
            <person name="Brock N.L."/>
            <person name="Burkhardt I."/>
            <person name="Tsavkelova E.A."/>
            <person name="Dickschat J.S."/>
            <person name="Galuszka P."/>
            <person name="Gueldener U."/>
            <person name="Tudzynski B."/>
        </authorList>
    </citation>
    <scope>NUCLEOTIDE SEQUENCE [LARGE SCALE GENOMIC DNA]</scope>
    <source>
        <strain>MRC7560</strain>
    </source>
</reference>
<reference key="2">
    <citation type="journal article" date="2021" name="Front. Fungal Biol.">
        <title>Biosynthesis of fusapyrone depends on the H3K9 methyltransferase, FmKmt1, in Fusarium mangiferae.</title>
        <authorList>
            <person name="Atanasoff-Kardjalieff A.K."/>
            <person name="Luenne F."/>
            <person name="Kalinina S."/>
            <person name="Strauss J."/>
            <person name="Humpf H.U."/>
            <person name="Studt-Reinhold L."/>
        </authorList>
    </citation>
    <scope>FUNCTION</scope>
    <scope>DISRUPTION PHENOTYPE</scope>
</reference>
<name>KMT1_FUSMA</name>
<protein>
    <recommendedName>
        <fullName evidence="5">Histone-lysine N-methyltransferase, H3 lysine-9 specific KMT1</fullName>
        <ecNumber evidence="7">2.1.1.355</ecNumber>
    </recommendedName>
    <alternativeName>
        <fullName evidence="5">H3K9-specific methyltransferase KMT1</fullName>
    </alternativeName>
</protein>
<dbReference type="EC" id="2.1.1.355" evidence="7"/>
<dbReference type="EMBL" id="FCQH01000012">
    <property type="protein sequence ID" value="CVL01483.1"/>
    <property type="molecule type" value="Genomic_DNA"/>
</dbReference>
<dbReference type="SMR" id="A0A1L7TZE5"/>
<dbReference type="VEuPathDB" id="FungiDB:FMAN_07768"/>
<dbReference type="Proteomes" id="UP000184255">
    <property type="component" value="Unassembled WGS sequence"/>
</dbReference>
<dbReference type="GO" id="GO:0005694">
    <property type="term" value="C:chromosome"/>
    <property type="evidence" value="ECO:0007669"/>
    <property type="project" value="UniProtKB-SubCell"/>
</dbReference>
<dbReference type="GO" id="GO:0005634">
    <property type="term" value="C:nucleus"/>
    <property type="evidence" value="ECO:0007669"/>
    <property type="project" value="InterPro"/>
</dbReference>
<dbReference type="GO" id="GO:0042054">
    <property type="term" value="F:histone methyltransferase activity"/>
    <property type="evidence" value="ECO:0007669"/>
    <property type="project" value="InterPro"/>
</dbReference>
<dbReference type="GO" id="GO:0008270">
    <property type="term" value="F:zinc ion binding"/>
    <property type="evidence" value="ECO:0007669"/>
    <property type="project" value="InterPro"/>
</dbReference>
<dbReference type="GO" id="GO:0032259">
    <property type="term" value="P:methylation"/>
    <property type="evidence" value="ECO:0007669"/>
    <property type="project" value="UniProtKB-KW"/>
</dbReference>
<dbReference type="CDD" id="cd19473">
    <property type="entry name" value="SET_SUV39H_DIM5-like"/>
    <property type="match status" value="1"/>
</dbReference>
<dbReference type="Gene3D" id="2.170.270.10">
    <property type="entry name" value="SET domain"/>
    <property type="match status" value="1"/>
</dbReference>
<dbReference type="InterPro" id="IPR050973">
    <property type="entry name" value="H3K9_Histone-Lys_N-MTase"/>
</dbReference>
<dbReference type="InterPro" id="IPR003616">
    <property type="entry name" value="Post-SET_dom"/>
</dbReference>
<dbReference type="InterPro" id="IPR007728">
    <property type="entry name" value="Pre-SET_dom"/>
</dbReference>
<dbReference type="InterPro" id="IPR001214">
    <property type="entry name" value="SET_dom"/>
</dbReference>
<dbReference type="InterPro" id="IPR046341">
    <property type="entry name" value="SET_dom_sf"/>
</dbReference>
<dbReference type="PANTHER" id="PTHR46223:SF3">
    <property type="entry name" value="HISTONE-LYSINE N-METHYLTRANSFERASE SET-23"/>
    <property type="match status" value="1"/>
</dbReference>
<dbReference type="PANTHER" id="PTHR46223">
    <property type="entry name" value="HISTONE-LYSINE N-METHYLTRANSFERASE SUV39H"/>
    <property type="match status" value="1"/>
</dbReference>
<dbReference type="Pfam" id="PF05033">
    <property type="entry name" value="Pre-SET"/>
    <property type="match status" value="1"/>
</dbReference>
<dbReference type="Pfam" id="PF00856">
    <property type="entry name" value="SET"/>
    <property type="match status" value="1"/>
</dbReference>
<dbReference type="SMART" id="SM00468">
    <property type="entry name" value="PreSET"/>
    <property type="match status" value="1"/>
</dbReference>
<dbReference type="SMART" id="SM00317">
    <property type="entry name" value="SET"/>
    <property type="match status" value="1"/>
</dbReference>
<dbReference type="SUPFAM" id="SSF82199">
    <property type="entry name" value="SET domain"/>
    <property type="match status" value="1"/>
</dbReference>
<dbReference type="PROSITE" id="PS50868">
    <property type="entry name" value="POST_SET"/>
    <property type="match status" value="1"/>
</dbReference>
<dbReference type="PROSITE" id="PS50867">
    <property type="entry name" value="PRE_SET"/>
    <property type="match status" value="1"/>
</dbReference>
<dbReference type="PROSITE" id="PS50280">
    <property type="entry name" value="SET"/>
    <property type="match status" value="1"/>
</dbReference>
<comment type="function">
    <text evidence="4">Histone methyltransferase that specifically trimethylates histone H3 to form H3K9me3. H3K9me3 marks chromatin regions for DNA methylation (Ref.2). Plays a key role in the regulation of the biosynthesis of the gamma-pyrones fusapyrone (FPY) and deoxyfusapyrone (dFPY) (Ref.2).</text>
</comment>
<comment type="catalytic activity">
    <reaction evidence="7">
        <text>L-lysyl(9)-[histone H3] + 3 S-adenosyl-L-methionine = N(6),N(6),N(6)-trimethyl-L-lysyl(9)-[histone H3] + 3 S-adenosyl-L-homocysteine + 3 H(+)</text>
        <dbReference type="Rhea" id="RHEA:60276"/>
        <dbReference type="Rhea" id="RHEA-COMP:15538"/>
        <dbReference type="Rhea" id="RHEA-COMP:15546"/>
        <dbReference type="ChEBI" id="CHEBI:15378"/>
        <dbReference type="ChEBI" id="CHEBI:29969"/>
        <dbReference type="ChEBI" id="CHEBI:57856"/>
        <dbReference type="ChEBI" id="CHEBI:59789"/>
        <dbReference type="ChEBI" id="CHEBI:61961"/>
        <dbReference type="EC" id="2.1.1.355"/>
    </reaction>
    <physiologicalReaction direction="left-to-right" evidence="7">
        <dbReference type="Rhea" id="RHEA:60277"/>
    </physiologicalReaction>
</comment>
<comment type="subcellular location">
    <subcellularLocation>
        <location evidence="6">Chromosome</location>
    </subcellularLocation>
</comment>
<comment type="disruption phenotype">
    <text evidence="4">Reduces H3K9me3 levels to about 20-50% (Ref.2). Slightly though significantly affects fungal hyphal growth and stress response and impairs wild type-like conidiation (Ref.2). While it does not affect the biosynthesis of most known secondary metabolites, results in an almost complete loss of fusapyrone and deoxyfusapyrone (Ref.2).</text>
</comment>
<comment type="similarity">
    <text evidence="3">Belongs to the class V-like SAM-binding methyltransferase superfamily.</text>
</comment>
<feature type="chain" id="PRO_0000458168" description="Histone-lysine N-methyltransferase, H3 lysine-9 specific KMT1">
    <location>
        <begin position="1"/>
        <end position="344"/>
    </location>
</feature>
<feature type="domain" description="Pre-SET" evidence="2">
    <location>
        <begin position="79"/>
        <end position="174"/>
    </location>
</feature>
<feature type="domain" description="SET" evidence="3">
    <location>
        <begin position="177"/>
        <end position="312"/>
    </location>
</feature>
<feature type="domain" description="Post-SET" evidence="1">
    <location>
        <begin position="328"/>
        <end position="344"/>
    </location>
</feature>
<feature type="binding site" evidence="2">
    <location>
        <position position="81"/>
    </location>
    <ligand>
        <name>Zn(2+)</name>
        <dbReference type="ChEBI" id="CHEBI:29105"/>
        <label>1</label>
    </ligand>
</feature>
<feature type="binding site" evidence="2">
    <location>
        <position position="81"/>
    </location>
    <ligand>
        <name>Zn(2+)</name>
        <dbReference type="ChEBI" id="CHEBI:29105"/>
        <label>2</label>
    </ligand>
</feature>
<feature type="binding site" evidence="2">
    <location>
        <position position="83"/>
    </location>
    <ligand>
        <name>Zn(2+)</name>
        <dbReference type="ChEBI" id="CHEBI:29105"/>
        <label>1</label>
    </ligand>
</feature>
<feature type="binding site" evidence="2">
    <location>
        <position position="89"/>
    </location>
    <ligand>
        <name>Zn(2+)</name>
        <dbReference type="ChEBI" id="CHEBI:29105"/>
        <label>1</label>
    </ligand>
</feature>
<feature type="binding site" evidence="2">
    <location>
        <position position="89"/>
    </location>
    <ligand>
        <name>Zn(2+)</name>
        <dbReference type="ChEBI" id="CHEBI:29105"/>
        <label>3</label>
    </ligand>
</feature>
<feature type="binding site" evidence="2">
    <location>
        <position position="94"/>
    </location>
    <ligand>
        <name>Zn(2+)</name>
        <dbReference type="ChEBI" id="CHEBI:29105"/>
        <label>1</label>
    </ligand>
</feature>
<feature type="binding site" evidence="2">
    <location>
        <position position="96"/>
    </location>
    <ligand>
        <name>Zn(2+)</name>
        <dbReference type="ChEBI" id="CHEBI:29105"/>
        <label>2</label>
    </ligand>
</feature>
<feature type="binding site" evidence="2">
    <location>
        <position position="156"/>
    </location>
    <ligand>
        <name>Zn(2+)</name>
        <dbReference type="ChEBI" id="CHEBI:29105"/>
        <label>2</label>
    </ligand>
</feature>
<feature type="binding site" evidence="2">
    <location>
        <position position="156"/>
    </location>
    <ligand>
        <name>Zn(2+)</name>
        <dbReference type="ChEBI" id="CHEBI:29105"/>
        <label>3</label>
    </ligand>
</feature>
<feature type="binding site" evidence="2">
    <location>
        <position position="160"/>
    </location>
    <ligand>
        <name>Zn(2+)</name>
        <dbReference type="ChEBI" id="CHEBI:29105"/>
        <label>2</label>
    </ligand>
</feature>
<feature type="binding site" evidence="2">
    <location>
        <position position="162"/>
    </location>
    <ligand>
        <name>Zn(2+)</name>
        <dbReference type="ChEBI" id="CHEBI:29105"/>
        <label>3</label>
    </ligand>
</feature>
<feature type="binding site" evidence="2">
    <location>
        <position position="166"/>
    </location>
    <ligand>
        <name>Zn(2+)</name>
        <dbReference type="ChEBI" id="CHEBI:29105"/>
        <label>3</label>
    </ligand>
</feature>
<feature type="binding site" evidence="3">
    <location>
        <position position="272"/>
    </location>
    <ligand>
        <name>Zn(2+)</name>
        <dbReference type="ChEBI" id="CHEBI:29105"/>
        <label>4</label>
    </ligand>
</feature>
<feature type="binding site" evidence="3">
    <location>
        <position position="311"/>
    </location>
    <ligand>
        <name>S-adenosyl-L-methionine</name>
        <dbReference type="ChEBI" id="CHEBI:59789"/>
    </ligand>
</feature>
<feature type="binding site" evidence="1">
    <location>
        <position position="332"/>
    </location>
    <ligand>
        <name>Zn(2+)</name>
        <dbReference type="ChEBI" id="CHEBI:29105"/>
        <label>5</label>
    </ligand>
</feature>
<feature type="binding site" evidence="1">
    <location>
        <position position="334"/>
    </location>
    <ligand>
        <name>Zn(2+)</name>
        <dbReference type="ChEBI" id="CHEBI:29105"/>
        <label>5</label>
    </ligand>
</feature>
<feature type="binding site" evidence="1">
    <location>
        <position position="339"/>
    </location>
    <ligand>
        <name>Zn(2+)</name>
        <dbReference type="ChEBI" id="CHEBI:29105"/>
        <label>5</label>
    </ligand>
</feature>
<keyword id="KW-0158">Chromosome</keyword>
<keyword id="KW-0479">Metal-binding</keyword>
<keyword id="KW-0489">Methyltransferase</keyword>
<keyword id="KW-0949">S-adenosyl-L-methionine</keyword>
<keyword id="KW-0808">Transferase</keyword>
<keyword id="KW-0862">Zinc</keyword>
<gene>
    <name evidence="5" type="primary">KMT1</name>
    <name type="ORF">FMAN_07768</name>
</gene>
<sequence>MAAMLKATERHFYFHGREGYEVERNNCHWCQIRAFPTHSTLPVTVVNEQDDEVLPDDFRFINNVVLGKGVEQAGDSFRSGCSCAKDSECQYTSCHCLADLEDDDSSDEEEFDAFGDKIERTTPKPRRIAYAYHSHGAKAGLLRSKFHNSKMPIYECHQSCSCSIDCPNRVVERGRTIPLEIFRTPDRGWGVRSPVSIKKGQFVDRYLGEIITSNEADRRRSQSVISQRKDVYLFALDKFTDPDSFDHRLKGPSLEVDGEFMSGPTRFVNHSCDPNMRIFARVGDHADKHIHDLALFAIKDIPEGEELTFDYVDGVSHEGEESGGDIDHMTRCLCGSKKCRKFLW</sequence>
<evidence type="ECO:0000255" key="1">
    <source>
        <dbReference type="PROSITE-ProRule" id="PRU00155"/>
    </source>
</evidence>
<evidence type="ECO:0000255" key="2">
    <source>
        <dbReference type="PROSITE-ProRule" id="PRU00157"/>
    </source>
</evidence>
<evidence type="ECO:0000255" key="3">
    <source>
        <dbReference type="PROSITE-ProRule" id="PRU00190"/>
    </source>
</evidence>
<evidence type="ECO:0000269" key="4">
    <source ref="2"/>
</evidence>
<evidence type="ECO:0000303" key="5">
    <source ref="2"/>
</evidence>
<evidence type="ECO:0000305" key="6"/>
<evidence type="ECO:0000305" key="7">
    <source ref="2"/>
</evidence>